<keyword id="KW-0067">ATP-binding</keyword>
<keyword id="KW-0963">Cytoplasm</keyword>
<keyword id="KW-0436">Ligase</keyword>
<keyword id="KW-0547">Nucleotide-binding</keyword>
<keyword id="KW-0658">Purine biosynthesis</keyword>
<evidence type="ECO:0000255" key="1">
    <source>
        <dbReference type="HAMAP-Rule" id="MF_00741"/>
    </source>
</evidence>
<dbReference type="EC" id="6.3.3.1" evidence="1"/>
<dbReference type="EMBL" id="FM211187">
    <property type="protein sequence ID" value="CAR67924.1"/>
    <property type="molecule type" value="Genomic_DNA"/>
</dbReference>
<dbReference type="RefSeq" id="WP_000182575.1">
    <property type="nucleotide sequence ID" value="NC_011900.1"/>
</dbReference>
<dbReference type="SMR" id="B8ZJN0"/>
<dbReference type="KEGG" id="sne:SPN23F00640"/>
<dbReference type="HOGENOM" id="CLU_047116_0_0_9"/>
<dbReference type="UniPathway" id="UPA00074">
    <property type="reaction ID" value="UER00129"/>
</dbReference>
<dbReference type="GO" id="GO:0005829">
    <property type="term" value="C:cytosol"/>
    <property type="evidence" value="ECO:0007669"/>
    <property type="project" value="TreeGrafter"/>
</dbReference>
<dbReference type="GO" id="GO:0005524">
    <property type="term" value="F:ATP binding"/>
    <property type="evidence" value="ECO:0007669"/>
    <property type="project" value="UniProtKB-KW"/>
</dbReference>
<dbReference type="GO" id="GO:0004637">
    <property type="term" value="F:phosphoribosylamine-glycine ligase activity"/>
    <property type="evidence" value="ECO:0007669"/>
    <property type="project" value="TreeGrafter"/>
</dbReference>
<dbReference type="GO" id="GO:0004641">
    <property type="term" value="F:phosphoribosylformylglycinamidine cyclo-ligase activity"/>
    <property type="evidence" value="ECO:0007669"/>
    <property type="project" value="UniProtKB-UniRule"/>
</dbReference>
<dbReference type="GO" id="GO:0006189">
    <property type="term" value="P:'de novo' IMP biosynthetic process"/>
    <property type="evidence" value="ECO:0007669"/>
    <property type="project" value="UniProtKB-UniRule"/>
</dbReference>
<dbReference type="GO" id="GO:0046084">
    <property type="term" value="P:adenine biosynthetic process"/>
    <property type="evidence" value="ECO:0007669"/>
    <property type="project" value="TreeGrafter"/>
</dbReference>
<dbReference type="CDD" id="cd02196">
    <property type="entry name" value="PurM"/>
    <property type="match status" value="1"/>
</dbReference>
<dbReference type="FunFam" id="3.30.1330.10:FF:000001">
    <property type="entry name" value="Phosphoribosylformylglycinamidine cyclo-ligase"/>
    <property type="match status" value="1"/>
</dbReference>
<dbReference type="FunFam" id="3.90.650.10:FF:000011">
    <property type="entry name" value="Phosphoribosylformylglycinamidine cyclo-ligase"/>
    <property type="match status" value="1"/>
</dbReference>
<dbReference type="Gene3D" id="3.90.650.10">
    <property type="entry name" value="PurM-like C-terminal domain"/>
    <property type="match status" value="1"/>
</dbReference>
<dbReference type="Gene3D" id="3.30.1330.10">
    <property type="entry name" value="PurM-like, N-terminal domain"/>
    <property type="match status" value="1"/>
</dbReference>
<dbReference type="HAMAP" id="MF_00741">
    <property type="entry name" value="AIRS"/>
    <property type="match status" value="1"/>
</dbReference>
<dbReference type="InterPro" id="IPR010918">
    <property type="entry name" value="PurM-like_C_dom"/>
</dbReference>
<dbReference type="InterPro" id="IPR036676">
    <property type="entry name" value="PurM-like_C_sf"/>
</dbReference>
<dbReference type="InterPro" id="IPR016188">
    <property type="entry name" value="PurM-like_N"/>
</dbReference>
<dbReference type="InterPro" id="IPR036921">
    <property type="entry name" value="PurM-like_N_sf"/>
</dbReference>
<dbReference type="InterPro" id="IPR004733">
    <property type="entry name" value="PurM_cligase"/>
</dbReference>
<dbReference type="NCBIfam" id="TIGR00878">
    <property type="entry name" value="purM"/>
    <property type="match status" value="1"/>
</dbReference>
<dbReference type="PANTHER" id="PTHR10520:SF12">
    <property type="entry name" value="TRIFUNCTIONAL PURINE BIOSYNTHETIC PROTEIN ADENOSINE-3"/>
    <property type="match status" value="1"/>
</dbReference>
<dbReference type="PANTHER" id="PTHR10520">
    <property type="entry name" value="TRIFUNCTIONAL PURINE BIOSYNTHETIC PROTEIN ADENOSINE-3-RELATED"/>
    <property type="match status" value="1"/>
</dbReference>
<dbReference type="Pfam" id="PF00586">
    <property type="entry name" value="AIRS"/>
    <property type="match status" value="1"/>
</dbReference>
<dbReference type="Pfam" id="PF02769">
    <property type="entry name" value="AIRS_C"/>
    <property type="match status" value="1"/>
</dbReference>
<dbReference type="SUPFAM" id="SSF56042">
    <property type="entry name" value="PurM C-terminal domain-like"/>
    <property type="match status" value="1"/>
</dbReference>
<dbReference type="SUPFAM" id="SSF55326">
    <property type="entry name" value="PurM N-terminal domain-like"/>
    <property type="match status" value="1"/>
</dbReference>
<reference key="1">
    <citation type="journal article" date="2009" name="J. Bacteriol.">
        <title>Role of conjugative elements in the evolution of the multidrug-resistant pandemic clone Streptococcus pneumoniae Spain23F ST81.</title>
        <authorList>
            <person name="Croucher N.J."/>
            <person name="Walker D."/>
            <person name="Romero P."/>
            <person name="Lennard N."/>
            <person name="Paterson G.K."/>
            <person name="Bason N.C."/>
            <person name="Mitchell A.M."/>
            <person name="Quail M.A."/>
            <person name="Andrew P.W."/>
            <person name="Parkhill J."/>
            <person name="Bentley S.D."/>
            <person name="Mitchell T.J."/>
        </authorList>
    </citation>
    <scope>NUCLEOTIDE SEQUENCE [LARGE SCALE GENOMIC DNA]</scope>
    <source>
        <strain>ATCC 700669 / Spain 23F-1</strain>
    </source>
</reference>
<name>PUR5_STRPJ</name>
<gene>
    <name evidence="1" type="primary">purM</name>
    <name type="ordered locus">SPN23F00640</name>
</gene>
<sequence length="340" mass="36502">MTNKNAYAQSGVDVEAGYEVVERIKKHVARTERAGVMGALGGFGGMFDLSKTGVKEPVLISGTDGVGTKLMLAIKYDKHDTIGQDCVAMCVNDIIAAGAEPLYFLDYVATGKNEPAKLEQVVAGVAEGCVQAGAALIGGETAEMPGMYGEDDYDLAGFAVGVAEKSQIIDGSKVVEGDVLLGLASSGIHSNGYSLVRRVFADYTGEEVLPELEGKKLKEVLLEPTRIYVKAVLPLIKEELVNGIAHITGGGFIENVPRMFADDLAAEIDESKVPVLPIFKALEKYGQIKHEEMFEIFNMGVGLMLAVSPENVERVKELLDEAVYEIGRIVKKENESVIIK</sequence>
<accession>B8ZJN0</accession>
<feature type="chain" id="PRO_1000148300" description="Phosphoribosylformylglycinamidine cyclo-ligase">
    <location>
        <begin position="1"/>
        <end position="340"/>
    </location>
</feature>
<protein>
    <recommendedName>
        <fullName evidence="1">Phosphoribosylformylglycinamidine cyclo-ligase</fullName>
        <ecNumber evidence="1">6.3.3.1</ecNumber>
    </recommendedName>
    <alternativeName>
        <fullName evidence="1">AIR synthase</fullName>
    </alternativeName>
    <alternativeName>
        <fullName evidence="1">AIRS</fullName>
    </alternativeName>
    <alternativeName>
        <fullName evidence="1">Phosphoribosyl-aminoimidazole synthetase</fullName>
    </alternativeName>
</protein>
<organism>
    <name type="scientific">Streptococcus pneumoniae (strain ATCC 700669 / Spain 23F-1)</name>
    <dbReference type="NCBI Taxonomy" id="561276"/>
    <lineage>
        <taxon>Bacteria</taxon>
        <taxon>Bacillati</taxon>
        <taxon>Bacillota</taxon>
        <taxon>Bacilli</taxon>
        <taxon>Lactobacillales</taxon>
        <taxon>Streptococcaceae</taxon>
        <taxon>Streptococcus</taxon>
    </lineage>
</organism>
<comment type="catalytic activity">
    <reaction evidence="1">
        <text>2-formamido-N(1)-(5-O-phospho-beta-D-ribosyl)acetamidine + ATP = 5-amino-1-(5-phospho-beta-D-ribosyl)imidazole + ADP + phosphate + H(+)</text>
        <dbReference type="Rhea" id="RHEA:23032"/>
        <dbReference type="ChEBI" id="CHEBI:15378"/>
        <dbReference type="ChEBI" id="CHEBI:30616"/>
        <dbReference type="ChEBI" id="CHEBI:43474"/>
        <dbReference type="ChEBI" id="CHEBI:137981"/>
        <dbReference type="ChEBI" id="CHEBI:147287"/>
        <dbReference type="ChEBI" id="CHEBI:456216"/>
        <dbReference type="EC" id="6.3.3.1"/>
    </reaction>
</comment>
<comment type="pathway">
    <text evidence="1">Purine metabolism; IMP biosynthesis via de novo pathway; 5-amino-1-(5-phospho-D-ribosyl)imidazole from N(2)-formyl-N(1)-(5-phospho-D-ribosyl)glycinamide: step 2/2.</text>
</comment>
<comment type="subcellular location">
    <subcellularLocation>
        <location evidence="1">Cytoplasm</location>
    </subcellularLocation>
</comment>
<comment type="similarity">
    <text evidence="1">Belongs to the AIR synthase family.</text>
</comment>
<proteinExistence type="inferred from homology"/>